<name>REN_TLCVA</name>
<gene>
    <name type="ORF">C3</name>
    <name type="ORF">L3</name>
</gene>
<organism>
    <name type="scientific">Tomato leaf curl virus (strain Australia)</name>
    <name type="common">ToLCV</name>
    <dbReference type="NCBI Taxonomy" id="223353"/>
    <lineage>
        <taxon>Viruses</taxon>
        <taxon>Monodnaviria</taxon>
        <taxon>Shotokuvirae</taxon>
        <taxon>Cressdnaviricota</taxon>
        <taxon>Repensiviricetes</taxon>
        <taxon>Geplafuvirales</taxon>
        <taxon>Geminiviridae</taxon>
        <taxon>Begomovirus</taxon>
        <taxon>Tomato leaf curl virus</taxon>
    </lineage>
</organism>
<reference key="1">
    <citation type="journal article" date="1993" name="J. Gen. Virol.">
        <title>Nucleotide sequence and genome organization of tomato leaf curl geminivirus.</title>
        <authorList>
            <person name="Dry I.B."/>
            <person name="Rigden J.E."/>
            <person name="Krake L.R."/>
            <person name="Mullineaux P.M."/>
            <person name="Rezaian M.A."/>
        </authorList>
    </citation>
    <scope>NUCLEOTIDE SEQUENCE [GENOMIC DNA]</scope>
</reference>
<dbReference type="EMBL" id="S53251">
    <property type="protein sequence ID" value="AAM33779.1"/>
    <property type="molecule type" value="Genomic_DNA"/>
</dbReference>
<dbReference type="PIR" id="JQ1889">
    <property type="entry name" value="JQ1889"/>
</dbReference>
<dbReference type="RefSeq" id="NP_632004.1">
    <property type="nucleotide sequence ID" value="NC_003896.1"/>
</dbReference>
<dbReference type="GeneID" id="944502"/>
<dbReference type="KEGG" id="vg:944502"/>
<dbReference type="Proteomes" id="UP000008246">
    <property type="component" value="Genome"/>
</dbReference>
<dbReference type="GO" id="GO:0016032">
    <property type="term" value="P:viral process"/>
    <property type="evidence" value="ECO:0007669"/>
    <property type="project" value="InterPro"/>
</dbReference>
<dbReference type="InterPro" id="IPR000657">
    <property type="entry name" value="Gemini_AL3"/>
</dbReference>
<dbReference type="Pfam" id="PF01407">
    <property type="entry name" value="Gemini_AL3"/>
    <property type="match status" value="1"/>
</dbReference>
<dbReference type="PRINTS" id="PR00231">
    <property type="entry name" value="GEMCOATAL3"/>
</dbReference>
<feature type="chain" id="PRO_0000222248" description="Replication enhancer protein">
    <location>
        <begin position="1"/>
        <end position="134"/>
    </location>
</feature>
<protein>
    <recommendedName>
        <fullName>Replication enhancer protein</fullName>
        <shortName>REn</shortName>
    </recommendedName>
    <alternativeName>
        <fullName>Protein C3</fullName>
    </alternativeName>
    <alternativeName>
        <fullName>Protein L3</fullName>
    </alternativeName>
</protein>
<sequence length="134" mass="16114">MDSRTGEPITARQAMNGEYIWRVPNPLYFKIIKHHKRPFNYNHDIIQVRIQFNHNLRRALAIHKCFLDFTVFTRLQPATWRFLRVFKTQVMKYLDSLGVISINNVIRSVDHVLYNVLDSTFDVIEDHDIKFNFY</sequence>
<comment type="function">
    <text evidence="1">Increases viral DNA accumulation. Enhances infectivity and symptom expression (By similarity).</text>
</comment>
<comment type="subunit">
    <text evidence="1">Homooligomer. Interacts with the replication-associated protein (REP). Interacts with host proliferating cell nuclear antigen (PCNA). Interacts with host retinoblastoma-related protein 1 (RBR1), and may thereby deregulate the host cell cycle. Oligomerization and interaction with PCNA are necessary for optimal replication enhancement (By similarity).</text>
</comment>
<comment type="similarity">
    <text evidence="2">Belongs to the geminiviridae replication enhancer protein family.</text>
</comment>
<accession>P36281</accession>
<organismHost>
    <name type="scientific">Cynanchum acutum</name>
    <dbReference type="NCBI Taxonomy" id="185024"/>
</organismHost>
<organismHost>
    <name type="scientific">Malva parviflora</name>
    <name type="common">Little mallow</name>
    <name type="synonym">Cheeseweed mallow</name>
    <dbReference type="NCBI Taxonomy" id="145753"/>
</organismHost>
<organismHost>
    <name type="scientific">Solanum lycopersicum</name>
    <name type="common">Tomato</name>
    <name type="synonym">Lycopersicon esculentum</name>
    <dbReference type="NCBI Taxonomy" id="4081"/>
</organismHost>
<evidence type="ECO:0000250" key="1"/>
<evidence type="ECO:0000305" key="2"/>
<proteinExistence type="inferred from homology"/>
<keyword id="KW-0945">Host-virus interaction</keyword>
<keyword id="KW-1185">Reference proteome</keyword>